<protein>
    <recommendedName>
        <fullName evidence="1">UPF0299 membrane protein YohJ</fullName>
    </recommendedName>
</protein>
<keyword id="KW-0997">Cell inner membrane</keyword>
<keyword id="KW-1003">Cell membrane</keyword>
<keyword id="KW-0472">Membrane</keyword>
<keyword id="KW-0812">Transmembrane</keyword>
<keyword id="KW-1133">Transmembrane helix</keyword>
<name>YOHJ_SALPK</name>
<dbReference type="EMBL" id="FM200053">
    <property type="protein sequence ID" value="CAR58760.1"/>
    <property type="molecule type" value="Genomic_DNA"/>
</dbReference>
<dbReference type="RefSeq" id="WP_000045719.1">
    <property type="nucleotide sequence ID" value="NC_011147.1"/>
</dbReference>
<dbReference type="SMR" id="B5BE54"/>
<dbReference type="KEGG" id="sek:SSPA0629"/>
<dbReference type="HOGENOM" id="CLU_113736_1_1_6"/>
<dbReference type="Proteomes" id="UP000001869">
    <property type="component" value="Chromosome"/>
</dbReference>
<dbReference type="GO" id="GO:0005886">
    <property type="term" value="C:plasma membrane"/>
    <property type="evidence" value="ECO:0007669"/>
    <property type="project" value="UniProtKB-SubCell"/>
</dbReference>
<dbReference type="HAMAP" id="MF_01144">
    <property type="entry name" value="UPF0299"/>
    <property type="match status" value="1"/>
</dbReference>
<dbReference type="InterPro" id="IPR005538">
    <property type="entry name" value="LrgA/CidA"/>
</dbReference>
<dbReference type="InterPro" id="IPR022957">
    <property type="entry name" value="Uncharacterised_UPF0299"/>
</dbReference>
<dbReference type="NCBIfam" id="NF002494">
    <property type="entry name" value="PRK01821.1"/>
    <property type="match status" value="1"/>
</dbReference>
<dbReference type="PANTHER" id="PTHR33931">
    <property type="entry name" value="HOLIN-LIKE PROTEIN CIDA-RELATED"/>
    <property type="match status" value="1"/>
</dbReference>
<dbReference type="PANTHER" id="PTHR33931:SF5">
    <property type="entry name" value="UPF0299 MEMBRANE PROTEIN YOHJ"/>
    <property type="match status" value="1"/>
</dbReference>
<dbReference type="Pfam" id="PF03788">
    <property type="entry name" value="LrgA"/>
    <property type="match status" value="1"/>
</dbReference>
<sequence>MSKSLNIIWQYIRAFVLIYACLYAGIFLASLLPITIPGSIIGMLILFVLLALQILPAKWVNPGCYVLIRYMALLFVPIGVGVMQYFDLLRAQFGPVVVSCAISTLVVFVVVSWSSHLIHGERKVVGQKGTKK</sequence>
<accession>B5BE54</accession>
<organism>
    <name type="scientific">Salmonella paratyphi A (strain AKU_12601)</name>
    <dbReference type="NCBI Taxonomy" id="554290"/>
    <lineage>
        <taxon>Bacteria</taxon>
        <taxon>Pseudomonadati</taxon>
        <taxon>Pseudomonadota</taxon>
        <taxon>Gammaproteobacteria</taxon>
        <taxon>Enterobacterales</taxon>
        <taxon>Enterobacteriaceae</taxon>
        <taxon>Salmonella</taxon>
    </lineage>
</organism>
<comment type="subcellular location">
    <subcellularLocation>
        <location evidence="1">Cell inner membrane</location>
        <topology evidence="1">Multi-pass membrane protein</topology>
    </subcellularLocation>
</comment>
<comment type="similarity">
    <text evidence="1">Belongs to the UPF0299 family.</text>
</comment>
<proteinExistence type="inferred from homology"/>
<gene>
    <name evidence="1" type="primary">yohJ</name>
    <name type="ordered locus">SSPA0629</name>
</gene>
<reference key="1">
    <citation type="journal article" date="2009" name="BMC Genomics">
        <title>Pseudogene accumulation in the evolutionary histories of Salmonella enterica serovars Paratyphi A and Typhi.</title>
        <authorList>
            <person name="Holt K.E."/>
            <person name="Thomson N.R."/>
            <person name="Wain J."/>
            <person name="Langridge G.C."/>
            <person name="Hasan R."/>
            <person name="Bhutta Z.A."/>
            <person name="Quail M.A."/>
            <person name="Norbertczak H."/>
            <person name="Walker D."/>
            <person name="Simmonds M."/>
            <person name="White B."/>
            <person name="Bason N."/>
            <person name="Mungall K."/>
            <person name="Dougan G."/>
            <person name="Parkhill J."/>
        </authorList>
    </citation>
    <scope>NUCLEOTIDE SEQUENCE [LARGE SCALE GENOMIC DNA]</scope>
    <source>
        <strain>AKU_12601</strain>
    </source>
</reference>
<evidence type="ECO:0000255" key="1">
    <source>
        <dbReference type="HAMAP-Rule" id="MF_01144"/>
    </source>
</evidence>
<feature type="chain" id="PRO_1000137373" description="UPF0299 membrane protein YohJ">
    <location>
        <begin position="1"/>
        <end position="132"/>
    </location>
</feature>
<feature type="transmembrane region" description="Helical" evidence="1">
    <location>
        <begin position="7"/>
        <end position="27"/>
    </location>
</feature>
<feature type="transmembrane region" description="Helical" evidence="1">
    <location>
        <begin position="31"/>
        <end position="51"/>
    </location>
</feature>
<feature type="transmembrane region" description="Helical" evidence="1">
    <location>
        <begin position="63"/>
        <end position="83"/>
    </location>
</feature>
<feature type="transmembrane region" description="Helical" evidence="1">
    <location>
        <begin position="93"/>
        <end position="113"/>
    </location>
</feature>